<protein>
    <recommendedName>
        <fullName>Carbonic anhydrase</fullName>
        <ecNumber>4.2.1.1</ecNumber>
    </recommendedName>
    <alternativeName>
        <fullName>Carbonate dehydratase</fullName>
    </alternativeName>
</protein>
<dbReference type="EC" id="4.2.1.1"/>
<dbReference type="EMBL" id="AF040381">
    <property type="protein sequence ID" value="AAC77891.1"/>
    <property type="molecule type" value="Genomic_DNA"/>
</dbReference>
<dbReference type="SMR" id="O52538"/>
<dbReference type="GO" id="GO:0042597">
    <property type="term" value="C:periplasmic space"/>
    <property type="evidence" value="ECO:0007669"/>
    <property type="project" value="UniProtKB-SubCell"/>
</dbReference>
<dbReference type="GO" id="GO:0004089">
    <property type="term" value="F:carbonate dehydratase activity"/>
    <property type="evidence" value="ECO:0007669"/>
    <property type="project" value="UniProtKB-EC"/>
</dbReference>
<dbReference type="GO" id="GO:0008270">
    <property type="term" value="F:zinc ion binding"/>
    <property type="evidence" value="ECO:0007669"/>
    <property type="project" value="InterPro"/>
</dbReference>
<dbReference type="CDD" id="cd03124">
    <property type="entry name" value="alpha_CA_prokaryotic_like"/>
    <property type="match status" value="1"/>
</dbReference>
<dbReference type="Gene3D" id="3.10.200.10">
    <property type="entry name" value="Alpha carbonic anhydrase"/>
    <property type="match status" value="1"/>
</dbReference>
<dbReference type="InterPro" id="IPR041891">
    <property type="entry name" value="Alpha_CA_prokaryot-like"/>
</dbReference>
<dbReference type="InterPro" id="IPR001148">
    <property type="entry name" value="CA_dom"/>
</dbReference>
<dbReference type="InterPro" id="IPR036398">
    <property type="entry name" value="CA_dom_sf"/>
</dbReference>
<dbReference type="InterPro" id="IPR023561">
    <property type="entry name" value="Carbonic_anhydrase_a-class"/>
</dbReference>
<dbReference type="InterPro" id="IPR018338">
    <property type="entry name" value="Carbonic_anhydrase_a-class_CS"/>
</dbReference>
<dbReference type="PANTHER" id="PTHR18952">
    <property type="entry name" value="CARBONIC ANHYDRASE"/>
    <property type="match status" value="1"/>
</dbReference>
<dbReference type="PANTHER" id="PTHR18952:SF265">
    <property type="entry name" value="CARBONIC ANHYDRASE"/>
    <property type="match status" value="1"/>
</dbReference>
<dbReference type="Pfam" id="PF00194">
    <property type="entry name" value="Carb_anhydrase"/>
    <property type="match status" value="1"/>
</dbReference>
<dbReference type="SMART" id="SM01057">
    <property type="entry name" value="Carb_anhydrase"/>
    <property type="match status" value="1"/>
</dbReference>
<dbReference type="SUPFAM" id="SSF51069">
    <property type="entry name" value="Carbonic anhydrase"/>
    <property type="match status" value="1"/>
</dbReference>
<dbReference type="PROSITE" id="PS00162">
    <property type="entry name" value="ALPHA_CA_1"/>
    <property type="match status" value="1"/>
</dbReference>
<dbReference type="PROSITE" id="PS51144">
    <property type="entry name" value="ALPHA_CA_2"/>
    <property type="match status" value="1"/>
</dbReference>
<organism>
    <name type="scientific">Pectobacterium carotovorum</name>
    <name type="common">Erwinia carotovora</name>
    <dbReference type="NCBI Taxonomy" id="554"/>
    <lineage>
        <taxon>Bacteria</taxon>
        <taxon>Pseudomonadati</taxon>
        <taxon>Pseudomonadota</taxon>
        <taxon>Gammaproteobacteria</taxon>
        <taxon>Enterobacterales</taxon>
        <taxon>Pectobacteriaceae</taxon>
        <taxon>Pectobacterium</taxon>
    </lineage>
</organism>
<feature type="signal peptide" evidence="2">
    <location>
        <begin position="1"/>
        <end position="19"/>
    </location>
</feature>
<feature type="chain" id="PRO_0000004264" description="Carbonic anhydrase">
    <location>
        <begin position="20"/>
        <end position="244"/>
    </location>
</feature>
<feature type="domain" description="Alpha-carbonic anhydrase" evidence="3">
    <location>
        <begin position="23"/>
        <end position="244"/>
    </location>
</feature>
<feature type="active site" description="Proton acceptor" evidence="3">
    <location>
        <position position="84"/>
    </location>
</feature>
<feature type="binding site" evidence="3">
    <location>
        <position position="109"/>
    </location>
    <ligand>
        <name>Zn(2+)</name>
        <dbReference type="ChEBI" id="CHEBI:29105"/>
        <note>catalytic</note>
    </ligand>
</feature>
<feature type="binding site" evidence="3">
    <location>
        <position position="111"/>
    </location>
    <ligand>
        <name>Zn(2+)</name>
        <dbReference type="ChEBI" id="CHEBI:29105"/>
        <note>catalytic</note>
    </ligand>
</feature>
<feature type="binding site" evidence="3">
    <location>
        <position position="128"/>
    </location>
    <ligand>
        <name>Zn(2+)</name>
        <dbReference type="ChEBI" id="CHEBI:29105"/>
        <note>catalytic</note>
    </ligand>
</feature>
<feature type="binding site" evidence="1">
    <location>
        <begin position="195"/>
        <end position="196"/>
    </location>
    <ligand>
        <name>substrate</name>
    </ligand>
</feature>
<feature type="disulfide bond" evidence="1">
    <location>
        <begin position="46"/>
        <end position="199"/>
    </location>
</feature>
<evidence type="ECO:0000250" key="1"/>
<evidence type="ECO:0000255" key="2"/>
<evidence type="ECO:0000255" key="3">
    <source>
        <dbReference type="PROSITE-ProRule" id="PRU01134"/>
    </source>
</evidence>
<evidence type="ECO:0000305" key="4"/>
<keyword id="KW-1015">Disulfide bond</keyword>
<keyword id="KW-0456">Lyase</keyword>
<keyword id="KW-0479">Metal-binding</keyword>
<keyword id="KW-0574">Periplasm</keyword>
<keyword id="KW-0732">Signal</keyword>
<keyword id="KW-0862">Zinc</keyword>
<name>CAH_PECCA</name>
<proteinExistence type="inferred from homology"/>
<comment type="function">
    <text>Reversible hydration of carbon dioxide.</text>
</comment>
<comment type="catalytic activity">
    <reaction>
        <text>hydrogencarbonate + H(+) = CO2 + H2O</text>
        <dbReference type="Rhea" id="RHEA:10748"/>
        <dbReference type="ChEBI" id="CHEBI:15377"/>
        <dbReference type="ChEBI" id="CHEBI:15378"/>
        <dbReference type="ChEBI" id="CHEBI:16526"/>
        <dbReference type="ChEBI" id="CHEBI:17544"/>
        <dbReference type="EC" id="4.2.1.1"/>
    </reaction>
</comment>
<comment type="cofactor">
    <cofactor evidence="1">
        <name>Zn(2+)</name>
        <dbReference type="ChEBI" id="CHEBI:29105"/>
    </cofactor>
</comment>
<comment type="subcellular location">
    <subcellularLocation>
        <location evidence="4">Periplasm</location>
    </subcellularLocation>
</comment>
<comment type="similarity">
    <text evidence="4">Belongs to the alpha-carbonic anhydrase family.</text>
</comment>
<accession>O52538</accession>
<sequence length="244" mass="26773">MKGKLSIALMLSVCFSASATDSVHWGYEGNGDPAHWGKLSPDFSLCETGKNQSPINIRQALNAQHDPLQLAFQSGTQQIINNGHTIQVNVSPGNTLLLDNETFTLQQFHFHAPSENEIDGKQFPLEGHFVYKNADGALTVIALMFQEGAANPQLATAWQQIPARVDQAEDVRTPVAIQALLPTSLNYYRFSGSLTTPPCSEGIRWLVLDHPVTASAEQISQFSSVMHHANNRPIQPLNGRIIIH</sequence>
<gene>
    <name type="primary">cah</name>
</gene>
<reference key="1">
    <citation type="journal article" date="1998" name="J. Bacteriol.">
        <title>Identification and characterization of the fis operon in enteric bacteria.</title>
        <authorList>
            <person name="Beach M.B."/>
            <person name="Osuna R."/>
        </authorList>
    </citation>
    <scope>NUCLEOTIDE SEQUENCE [GENOMIC DNA]</scope>
</reference>